<evidence type="ECO:0000255" key="1">
    <source>
        <dbReference type="HAMAP-Rule" id="MF_00313"/>
    </source>
</evidence>
<comment type="catalytic activity">
    <reaction evidence="1">
        <text>L-glutamine + H2O = L-glutamate + NH4(+)</text>
        <dbReference type="Rhea" id="RHEA:15889"/>
        <dbReference type="ChEBI" id="CHEBI:15377"/>
        <dbReference type="ChEBI" id="CHEBI:28938"/>
        <dbReference type="ChEBI" id="CHEBI:29985"/>
        <dbReference type="ChEBI" id="CHEBI:58359"/>
        <dbReference type="EC" id="3.5.1.2"/>
    </reaction>
</comment>
<comment type="subunit">
    <text evidence="1">Homotetramer.</text>
</comment>
<comment type="similarity">
    <text evidence="1">Belongs to the glutaminase family.</text>
</comment>
<sequence>MQALLNEILDAVRPLIGQGKVADYIPALGTVPANQLGIAVYGNDGEMYCAGDAETPFSVQSISKVFSLVQAIEHSGEAIWERLGHEPSGQPFNSLVQLEFERGRPRNPFINAGALVICDINQSRFAAPALSMRDFVRRLSGNPQVMVDGKVADSEYQHRARNAAMAYLMQSFGNFHNDVEAVLRSYFSHCALRMNCIDLARAFCFLANDGFCKHSGEQILTRRQTQQVNSIMATSGLYDEAGNFAYRVGLPGKSGVGGGIVAVVPGQFTVCVWSPELNTAGNSLAGMAALEMLSSRIGWSVF</sequence>
<protein>
    <recommendedName>
        <fullName evidence="1">Glutaminase</fullName>
        <ecNumber evidence="1">3.5.1.2</ecNumber>
    </recommendedName>
</protein>
<organism>
    <name type="scientific">Pseudomonas fluorescens (strain Pf0-1)</name>
    <dbReference type="NCBI Taxonomy" id="205922"/>
    <lineage>
        <taxon>Bacteria</taxon>
        <taxon>Pseudomonadati</taxon>
        <taxon>Pseudomonadota</taxon>
        <taxon>Gammaproteobacteria</taxon>
        <taxon>Pseudomonadales</taxon>
        <taxon>Pseudomonadaceae</taxon>
        <taxon>Pseudomonas</taxon>
    </lineage>
</organism>
<feature type="chain" id="PRO_1000048345" description="Glutaminase">
    <location>
        <begin position="1"/>
        <end position="302"/>
    </location>
</feature>
<feature type="binding site" evidence="1">
    <location>
        <position position="61"/>
    </location>
    <ligand>
        <name>substrate</name>
    </ligand>
</feature>
<feature type="binding site" evidence="1">
    <location>
        <position position="111"/>
    </location>
    <ligand>
        <name>substrate</name>
    </ligand>
</feature>
<feature type="binding site" evidence="1">
    <location>
        <position position="155"/>
    </location>
    <ligand>
        <name>substrate</name>
    </ligand>
</feature>
<feature type="binding site" evidence="1">
    <location>
        <position position="162"/>
    </location>
    <ligand>
        <name>substrate</name>
    </ligand>
</feature>
<feature type="binding site" evidence="1">
    <location>
        <position position="186"/>
    </location>
    <ligand>
        <name>substrate</name>
    </ligand>
</feature>
<feature type="binding site" evidence="1">
    <location>
        <position position="238"/>
    </location>
    <ligand>
        <name>substrate</name>
    </ligand>
</feature>
<feature type="binding site" evidence="1">
    <location>
        <position position="256"/>
    </location>
    <ligand>
        <name>substrate</name>
    </ligand>
</feature>
<proteinExistence type="inferred from homology"/>
<name>GLSA_PSEPF</name>
<keyword id="KW-0378">Hydrolase</keyword>
<accession>Q3KAU3</accession>
<reference key="1">
    <citation type="journal article" date="2009" name="Genome Biol.">
        <title>Genomic and genetic analyses of diversity and plant interactions of Pseudomonas fluorescens.</title>
        <authorList>
            <person name="Silby M.W."/>
            <person name="Cerdeno-Tarraga A.M."/>
            <person name="Vernikos G.S."/>
            <person name="Giddens S.R."/>
            <person name="Jackson R.W."/>
            <person name="Preston G.M."/>
            <person name="Zhang X.-X."/>
            <person name="Moon C.D."/>
            <person name="Gehrig S.M."/>
            <person name="Godfrey S.A.C."/>
            <person name="Knight C.G."/>
            <person name="Malone J.G."/>
            <person name="Robinson Z."/>
            <person name="Spiers A.J."/>
            <person name="Harris S."/>
            <person name="Challis G.L."/>
            <person name="Yaxley A.M."/>
            <person name="Harris D."/>
            <person name="Seeger K."/>
            <person name="Murphy L."/>
            <person name="Rutter S."/>
            <person name="Squares R."/>
            <person name="Quail M.A."/>
            <person name="Saunders E."/>
            <person name="Mavromatis K."/>
            <person name="Brettin T.S."/>
            <person name="Bentley S.D."/>
            <person name="Hothersall J."/>
            <person name="Stephens E."/>
            <person name="Thomas C.M."/>
            <person name="Parkhill J."/>
            <person name="Levy S.B."/>
            <person name="Rainey P.B."/>
            <person name="Thomson N.R."/>
        </authorList>
    </citation>
    <scope>NUCLEOTIDE SEQUENCE [LARGE SCALE GENOMIC DNA]</scope>
    <source>
        <strain>Pf0-1</strain>
    </source>
</reference>
<dbReference type="EC" id="3.5.1.2" evidence="1"/>
<dbReference type="EMBL" id="CP000094">
    <property type="protein sequence ID" value="ABA75111.1"/>
    <property type="molecule type" value="Genomic_DNA"/>
</dbReference>
<dbReference type="SMR" id="Q3KAU3"/>
<dbReference type="KEGG" id="pfo:Pfl01_3373"/>
<dbReference type="eggNOG" id="COG2066">
    <property type="taxonomic scope" value="Bacteria"/>
</dbReference>
<dbReference type="HOGENOM" id="CLU_027932_1_1_6"/>
<dbReference type="Proteomes" id="UP000002704">
    <property type="component" value="Chromosome"/>
</dbReference>
<dbReference type="GO" id="GO:0004359">
    <property type="term" value="F:glutaminase activity"/>
    <property type="evidence" value="ECO:0007669"/>
    <property type="project" value="UniProtKB-UniRule"/>
</dbReference>
<dbReference type="GO" id="GO:0006537">
    <property type="term" value="P:glutamate biosynthetic process"/>
    <property type="evidence" value="ECO:0007669"/>
    <property type="project" value="TreeGrafter"/>
</dbReference>
<dbReference type="GO" id="GO:0006543">
    <property type="term" value="P:glutamine catabolic process"/>
    <property type="evidence" value="ECO:0007669"/>
    <property type="project" value="TreeGrafter"/>
</dbReference>
<dbReference type="FunFam" id="3.40.710.10:FF:000005">
    <property type="entry name" value="Glutaminase"/>
    <property type="match status" value="1"/>
</dbReference>
<dbReference type="Gene3D" id="3.40.710.10">
    <property type="entry name" value="DD-peptidase/beta-lactamase superfamily"/>
    <property type="match status" value="1"/>
</dbReference>
<dbReference type="HAMAP" id="MF_00313">
    <property type="entry name" value="Glutaminase"/>
    <property type="match status" value="1"/>
</dbReference>
<dbReference type="InterPro" id="IPR012338">
    <property type="entry name" value="Beta-lactam/transpept-like"/>
</dbReference>
<dbReference type="InterPro" id="IPR015868">
    <property type="entry name" value="Glutaminase"/>
</dbReference>
<dbReference type="NCBIfam" id="TIGR03814">
    <property type="entry name" value="Gln_ase"/>
    <property type="match status" value="1"/>
</dbReference>
<dbReference type="NCBIfam" id="NF002132">
    <property type="entry name" value="PRK00971.1-1"/>
    <property type="match status" value="1"/>
</dbReference>
<dbReference type="NCBIfam" id="NF002133">
    <property type="entry name" value="PRK00971.1-2"/>
    <property type="match status" value="1"/>
</dbReference>
<dbReference type="PANTHER" id="PTHR12544">
    <property type="entry name" value="GLUTAMINASE"/>
    <property type="match status" value="1"/>
</dbReference>
<dbReference type="PANTHER" id="PTHR12544:SF29">
    <property type="entry name" value="GLUTAMINASE"/>
    <property type="match status" value="1"/>
</dbReference>
<dbReference type="Pfam" id="PF04960">
    <property type="entry name" value="Glutaminase"/>
    <property type="match status" value="1"/>
</dbReference>
<dbReference type="SUPFAM" id="SSF56601">
    <property type="entry name" value="beta-lactamase/transpeptidase-like"/>
    <property type="match status" value="1"/>
</dbReference>
<gene>
    <name evidence="1" type="primary">glsA</name>
    <name type="ordered locus">Pfl01_3373</name>
</gene>